<comment type="function">
    <text evidence="2 6">Catalyzes the synthesis of acetyl-CoA from short-chain fatty acids (PubMed:16788062). Acetate is the preferred substrate (PubMed:16788062). Can also utilize propionate with a much lower affinity (By similarity). Provides acetyl-CoA that is utilized mainly for oxidation under ketogenic conditions (By similarity). Involved in thermogenesis under ketogenic conditions, using acetate as a vital fuel when carbohydrate availability is insufficient (By similarity).</text>
</comment>
<comment type="catalytic activity">
    <reaction evidence="6">
        <text>acetate + ATP + CoA = acetyl-CoA + AMP + diphosphate</text>
        <dbReference type="Rhea" id="RHEA:23176"/>
        <dbReference type="ChEBI" id="CHEBI:30089"/>
        <dbReference type="ChEBI" id="CHEBI:30616"/>
        <dbReference type="ChEBI" id="CHEBI:33019"/>
        <dbReference type="ChEBI" id="CHEBI:57287"/>
        <dbReference type="ChEBI" id="CHEBI:57288"/>
        <dbReference type="ChEBI" id="CHEBI:456215"/>
        <dbReference type="EC" id="6.2.1.1"/>
    </reaction>
    <physiologicalReaction direction="left-to-right" evidence="12">
        <dbReference type="Rhea" id="RHEA:23177"/>
    </physiologicalReaction>
</comment>
<comment type="catalytic activity">
    <reaction evidence="2">
        <text>propanoate + ATP + CoA = propanoyl-CoA + AMP + diphosphate</text>
        <dbReference type="Rhea" id="RHEA:20373"/>
        <dbReference type="ChEBI" id="CHEBI:17272"/>
        <dbReference type="ChEBI" id="CHEBI:30616"/>
        <dbReference type="ChEBI" id="CHEBI:33019"/>
        <dbReference type="ChEBI" id="CHEBI:57287"/>
        <dbReference type="ChEBI" id="CHEBI:57392"/>
        <dbReference type="ChEBI" id="CHEBI:456215"/>
        <dbReference type="EC" id="6.2.1.17"/>
    </reaction>
    <physiologicalReaction direction="left-to-right" evidence="2">
        <dbReference type="Rhea" id="RHEA:20374"/>
    </physiologicalReaction>
</comment>
<comment type="activity regulation">
    <text evidence="6">Inhibited by acetylation at Lys-642 and activated by deacetylation mediated by the deacetylase SIRT3.</text>
</comment>
<comment type="subunit">
    <text evidence="6 7">Interacts with SIRT3.</text>
</comment>
<comment type="interaction">
    <interactant intactId="EBI-10313831">
        <id>Q9NUB1</id>
    </interactant>
    <interactant intactId="EBI-16439278">
        <id>Q6FHY5</id>
        <label>MEOX2</label>
    </interactant>
    <organismsDiffer>false</organismsDiffer>
    <experiments>3</experiments>
</comment>
<comment type="interaction">
    <interactant intactId="EBI-10313831">
        <id>Q9NUB1</id>
    </interactant>
    <interactant intactId="EBI-2107455">
        <id>Q08AM6</id>
        <label>VAC14</label>
    </interactant>
    <organismsDiffer>false</organismsDiffer>
    <experiments>6</experiments>
</comment>
<comment type="subcellular location">
    <subcellularLocation>
        <location evidence="6">Mitochondrion matrix</location>
    </subcellularLocation>
</comment>
<comment type="alternative products">
    <event type="alternative splicing"/>
    <isoform>
        <id>Q9NUB1-1</id>
        <name>1</name>
        <sequence type="displayed"/>
    </isoform>
    <isoform>
        <id>Q9NUB1-2</id>
        <name>2</name>
        <sequence type="described" ref="VSP_007249"/>
    </isoform>
    <isoform>
        <id>Q9NUB1-3</id>
        <name>3</name>
        <sequence type="described" ref="VSP_044693 VSP_044694"/>
    </isoform>
    <isoform>
        <id>Q9NUB1-4</id>
        <name>4</name>
        <sequence type="described" ref="VSP_045546 VSP_045547"/>
    </isoform>
</comment>
<comment type="PTM">
    <text evidence="6">Reversibly acetylated on Lys-642 (PubMed:16788062). The acetyl-CoA synthase activity is inhibited by acetylation and activated by deacetylation mediated by the deacetylase SIRT3.</text>
</comment>
<comment type="similarity">
    <text evidence="11">Belongs to the ATP-dependent AMP-binding enzyme family.</text>
</comment>
<comment type="sequence caution" evidence="11">
    <conflict type="erroneous initiation">
        <sequence resource="EMBL-CDS" id="BAB55390"/>
    </conflict>
</comment>
<comment type="sequence caution" evidence="11">
    <conflict type="frameshift">
        <sequence resource="EMBL-CDS" id="BAC03853"/>
    </conflict>
</comment>
<comment type="sequence caution" evidence="11">
    <conflict type="miscellaneous discrepancy">
        <sequence resource="EMBL-CDS" id="BAC03853"/>
    </conflict>
    <text>Sequencing errors.</text>
</comment>
<organism>
    <name type="scientific">Homo sapiens</name>
    <name type="common">Human</name>
    <dbReference type="NCBI Taxonomy" id="9606"/>
    <lineage>
        <taxon>Eukaryota</taxon>
        <taxon>Metazoa</taxon>
        <taxon>Chordata</taxon>
        <taxon>Craniata</taxon>
        <taxon>Vertebrata</taxon>
        <taxon>Euteleostomi</taxon>
        <taxon>Mammalia</taxon>
        <taxon>Eutheria</taxon>
        <taxon>Euarchontoglires</taxon>
        <taxon>Primates</taxon>
        <taxon>Haplorrhini</taxon>
        <taxon>Catarrhini</taxon>
        <taxon>Hominidae</taxon>
        <taxon>Homo</taxon>
    </lineage>
</organism>
<accession>Q9NUB1</accession>
<accession>B3KXL2</accession>
<accession>B4DJZ3</accession>
<accession>D3DW48</accession>
<accession>F5H6F4</accession>
<accession>F8W7Y1</accession>
<accession>Q5TF42</accession>
<accession>Q8IV99</accession>
<accession>Q8N234</accession>
<accession>Q96JI1</accession>
<accession>Q96JX6</accession>
<accession>Q9NU28</accession>
<proteinExistence type="evidence at protein level"/>
<sequence>MAARTLGRGVGRLLGSLRGLSGQPARPPCGVSAPRRAASGPSGSAPAVAAAAAQPGSYPALSAQAAREPAAFWGPLARDTLVWDTPYHTVWDCDFSTGKIGWFLGGQLNVSVNCLDQHVRKSPESVALIWERDEPGTEVRITYRELLETTCRLANTLKRHGVHRGDRVAIYMPVSPLAVAAMLACARIGAVHTVIFAGFSAESLAGRINDAKCKVVITFNQGLRGGRVVELKKIVDEAVKHCPTVQHVLVAHRTDNKVHMGDLDVPLEQEMAKEDPVCAPESMGSEDMLFMLYTSGSTGMPKGIVHTQAGYLLYAALTHKLVFDHQPGDIFGCVADIGWITGHSYVVYGPLCNGATSVLFESTPVYPNAGRYWETVERLKINQFYGAPTAVRLLLKYGDAWVKKYDRSSLRTLGSVGEPINCEAWEWLHRVVGDSRCTLVDTWWQTETGGICIAPRPSEEGAEILPAMAMRPFFGIVPVLMDEKGSVVEGSNVSGALCISQAWPGMARTIYGDHQRFVDAYFKAYPGYYFTGDGAYRTEGGYYQITGRMDDVINISGHRLGTAEIEDAIADHPAVPESAVIGYPHDIKGEAAFAFIVVKDSAGDSDVVVQELKSMVATKIAKYAVPDEILVVKRLPKTRSGKVMRRLLRKIITSEAQELGDTTTLEDPSIIAEILSVYQKCKDKQAAAK</sequence>
<keyword id="KW-0002">3D-structure</keyword>
<keyword id="KW-0007">Acetylation</keyword>
<keyword id="KW-0025">Alternative splicing</keyword>
<keyword id="KW-0067">ATP-binding</keyword>
<keyword id="KW-0903">Direct protein sequencing</keyword>
<keyword id="KW-0436">Ligase</keyword>
<keyword id="KW-0443">Lipid metabolism</keyword>
<keyword id="KW-0496">Mitochondrion</keyword>
<keyword id="KW-0547">Nucleotide-binding</keyword>
<keyword id="KW-1267">Proteomics identification</keyword>
<keyword id="KW-1185">Reference proteome</keyword>
<keyword id="KW-0809">Transit peptide</keyword>
<feature type="transit peptide" description="Mitochondrion" evidence="6">
    <location>
        <begin position="1"/>
        <end position="37"/>
    </location>
</feature>
<feature type="chain" id="PRO_0000000596" description="Acetyl-coenzyme A synthetase 2-like, mitochondrial">
    <location>
        <begin position="38"/>
        <end position="689"/>
    </location>
</feature>
<feature type="region of interest" description="Disordered" evidence="3">
    <location>
        <begin position="17"/>
        <end position="46"/>
    </location>
</feature>
<feature type="compositionally biased region" description="Low complexity" evidence="3">
    <location>
        <begin position="32"/>
        <end position="46"/>
    </location>
</feature>
<feature type="binding site" evidence="1">
    <location>
        <begin position="224"/>
        <end position="227"/>
    </location>
    <ligand>
        <name>CoA</name>
        <dbReference type="ChEBI" id="CHEBI:57287"/>
    </ligand>
</feature>
<feature type="binding site" evidence="1">
    <location>
        <position position="341"/>
    </location>
    <ligand>
        <name>CoA</name>
        <dbReference type="ChEBI" id="CHEBI:57287"/>
    </ligand>
</feature>
<feature type="binding site" evidence="1">
    <location>
        <begin position="417"/>
        <end position="419"/>
    </location>
    <ligand>
        <name>ATP</name>
        <dbReference type="ChEBI" id="CHEBI:30616"/>
    </ligand>
</feature>
<feature type="binding site" evidence="1">
    <location>
        <begin position="441"/>
        <end position="446"/>
    </location>
    <ligand>
        <name>ATP</name>
        <dbReference type="ChEBI" id="CHEBI:30616"/>
    </ligand>
</feature>
<feature type="binding site" evidence="1">
    <location>
        <position position="533"/>
    </location>
    <ligand>
        <name>ATP</name>
        <dbReference type="ChEBI" id="CHEBI:30616"/>
    </ligand>
</feature>
<feature type="binding site" evidence="1">
    <location>
        <position position="548"/>
    </location>
    <ligand>
        <name>ATP</name>
        <dbReference type="ChEBI" id="CHEBI:30616"/>
    </ligand>
</feature>
<feature type="binding site" evidence="1">
    <location>
        <position position="556"/>
    </location>
    <ligand>
        <name>CoA</name>
        <dbReference type="ChEBI" id="CHEBI:57287"/>
    </ligand>
</feature>
<feature type="binding site" evidence="1">
    <location>
        <position position="559"/>
    </location>
    <ligand>
        <name>ATP</name>
        <dbReference type="ChEBI" id="CHEBI:30616"/>
    </ligand>
</feature>
<feature type="modified residue" description="N6-acetyllysine" evidence="13">
    <location>
        <position position="396"/>
    </location>
</feature>
<feature type="modified residue" description="N6-acetyllysine" evidence="6">
    <location>
        <position position="642"/>
    </location>
</feature>
<feature type="splice variant" id="VSP_044693" description="In isoform 3." evidence="8">
    <original>MAARTLGRGVGRLLGSLRGLSG</original>
    <variation>MRRRKERQPWDRFHFLHFAPHG</variation>
    <location>
        <begin position="1"/>
        <end position="22"/>
    </location>
</feature>
<feature type="splice variant" id="VSP_044694" description="In isoform 3." evidence="8">
    <location>
        <begin position="23"/>
        <end position="143"/>
    </location>
</feature>
<feature type="splice variant" id="VSP_007249" description="In isoform 2." evidence="9">
    <location>
        <begin position="446"/>
        <end position="447"/>
    </location>
</feature>
<feature type="splice variant" id="VSP_045546" description="In isoform 4." evidence="8">
    <original>SGHRLGTAEIEDAIADHPAV</original>
    <variation>LQIVGFFREAIRNSGDLLEH</variation>
    <location>
        <begin position="556"/>
        <end position="575"/>
    </location>
</feature>
<feature type="splice variant" id="VSP_045547" description="In isoform 4." evidence="8">
    <location>
        <begin position="576"/>
        <end position="689"/>
    </location>
</feature>
<feature type="sequence variant" id="VAR_048184" description="In dbSNP:rs6050249." evidence="4 5">
    <original>V</original>
    <variation>M</variation>
    <location>
        <position position="488"/>
    </location>
</feature>
<feature type="mutagenesis site" description="Loss of activity." evidence="6">
    <original>K</original>
    <variation>Q</variation>
    <location>
        <position position="642"/>
    </location>
</feature>
<feature type="sequence conflict" description="In Ref. 1; BAG54524." evidence="11" ref="1">
    <original>K</original>
    <variation>I</variation>
    <location>
        <position position="233"/>
    </location>
</feature>
<feature type="sequence conflict" description="In Ref. 4; AAH39261." evidence="11" ref="4">
    <original>V</original>
    <variation>M</variation>
    <location>
        <position position="277"/>
    </location>
</feature>
<protein>
    <recommendedName>
        <fullName>Acetyl-coenzyme A synthetase 2-like, mitochondrial</fullName>
        <ecNumber evidence="6">6.2.1.1</ecNumber>
    </recommendedName>
    <alternativeName>
        <fullName>Acetate--CoA ligase 2</fullName>
    </alternativeName>
    <alternativeName>
        <fullName evidence="10">Acetyl-CoA synthetase 2</fullName>
        <shortName evidence="10">AceCS2</shortName>
    </alternativeName>
    <alternativeName>
        <fullName>Acyl-CoA synthetase short-chain family member 1</fullName>
    </alternativeName>
    <alternativeName>
        <fullName>Propionate--CoA ligase</fullName>
        <ecNumber evidence="2">6.2.1.17</ecNumber>
    </alternativeName>
</protein>
<dbReference type="EC" id="6.2.1.1" evidence="6"/>
<dbReference type="EC" id="6.2.1.17" evidence="2"/>
<dbReference type="EMBL" id="AK027817">
    <property type="protein sequence ID" value="BAB55390.1"/>
    <property type="status" value="ALT_INIT"/>
    <property type="molecule type" value="mRNA"/>
</dbReference>
<dbReference type="EMBL" id="AK092295">
    <property type="protein sequence ID" value="BAC03853.1"/>
    <property type="status" value="ALT_SEQ"/>
    <property type="molecule type" value="mRNA"/>
</dbReference>
<dbReference type="EMBL" id="AK127566">
    <property type="protein sequence ID" value="BAG54524.1"/>
    <property type="molecule type" value="mRNA"/>
</dbReference>
<dbReference type="EMBL" id="AK296306">
    <property type="protein sequence ID" value="BAG59005.1"/>
    <property type="molecule type" value="mRNA"/>
</dbReference>
<dbReference type="EMBL" id="AL035661">
    <property type="status" value="NOT_ANNOTATED_CDS"/>
    <property type="molecule type" value="Genomic_DNA"/>
</dbReference>
<dbReference type="EMBL" id="AL080312">
    <property type="status" value="NOT_ANNOTATED_CDS"/>
    <property type="molecule type" value="Genomic_DNA"/>
</dbReference>
<dbReference type="EMBL" id="CH471133">
    <property type="protein sequence ID" value="EAX10106.1"/>
    <property type="molecule type" value="Genomic_DNA"/>
</dbReference>
<dbReference type="EMBL" id="CH471133">
    <property type="protein sequence ID" value="EAX10109.1"/>
    <property type="molecule type" value="Genomic_DNA"/>
</dbReference>
<dbReference type="EMBL" id="BC039261">
    <property type="protein sequence ID" value="AAH39261.1"/>
    <property type="molecule type" value="mRNA"/>
</dbReference>
<dbReference type="EMBL" id="BC044588">
    <property type="protein sequence ID" value="AAH44588.1"/>
    <property type="molecule type" value="mRNA"/>
</dbReference>
<dbReference type="EMBL" id="AB058749">
    <property type="protein sequence ID" value="BAB47475.1"/>
    <property type="molecule type" value="mRNA"/>
</dbReference>
<dbReference type="CCDS" id="CCDS13167.1">
    <molecule id="Q9NUB1-1"/>
</dbReference>
<dbReference type="CCDS" id="CCDS58764.1">
    <molecule id="Q9NUB1-3"/>
</dbReference>
<dbReference type="CCDS" id="CCDS58765.1">
    <molecule id="Q9NUB1-4"/>
</dbReference>
<dbReference type="RefSeq" id="NP_001239604.1">
    <molecule id="Q9NUB1-2"/>
    <property type="nucleotide sequence ID" value="NM_001252675.2"/>
</dbReference>
<dbReference type="RefSeq" id="NP_001239605.1">
    <molecule id="Q9NUB1-3"/>
    <property type="nucleotide sequence ID" value="NM_001252676.2"/>
</dbReference>
<dbReference type="RefSeq" id="NP_001239606.1">
    <molecule id="Q9NUB1-4"/>
    <property type="nucleotide sequence ID" value="NM_001252677.2"/>
</dbReference>
<dbReference type="RefSeq" id="NP_115890.2">
    <molecule id="Q9NUB1-1"/>
    <property type="nucleotide sequence ID" value="NM_032501.3"/>
</dbReference>
<dbReference type="PDB" id="3GLR">
    <property type="method" value="X-ray"/>
    <property type="resolution" value="1.80 A"/>
    <property type="chains" value="B=638-649"/>
</dbReference>
<dbReference type="PDB" id="3GLT">
    <property type="method" value="X-ray"/>
    <property type="resolution" value="2.10 A"/>
    <property type="chains" value="B=638-649"/>
</dbReference>
<dbReference type="PDB" id="3GLU">
    <property type="method" value="X-ray"/>
    <property type="resolution" value="2.50 A"/>
    <property type="chains" value="B=638-649"/>
</dbReference>
<dbReference type="PDB" id="4BVE">
    <property type="method" value="X-ray"/>
    <property type="resolution" value="2.05 A"/>
    <property type="chains" value="B=638-647"/>
</dbReference>
<dbReference type="PDB" id="4BVF">
    <property type="method" value="X-ray"/>
    <property type="resolution" value="2.70 A"/>
    <property type="chains" value="B=638-647"/>
</dbReference>
<dbReference type="PDB" id="4BVG">
    <property type="method" value="X-ray"/>
    <property type="resolution" value="2.50 A"/>
    <property type="chains" value="B=638-647"/>
</dbReference>
<dbReference type="PDB" id="4C78">
    <property type="method" value="X-ray"/>
    <property type="resolution" value="2.00 A"/>
    <property type="chains" value="C=638-647"/>
</dbReference>
<dbReference type="PDB" id="5Y4H">
    <property type="method" value="X-ray"/>
    <property type="resolution" value="2.60 A"/>
    <property type="chains" value="B=638-649"/>
</dbReference>
<dbReference type="PDB" id="5YTK">
    <property type="method" value="X-ray"/>
    <property type="resolution" value="2.70 A"/>
    <property type="chains" value="G/J/K/L=638-645"/>
</dbReference>
<dbReference type="PDBsum" id="3GLR"/>
<dbReference type="PDBsum" id="3GLT"/>
<dbReference type="PDBsum" id="3GLU"/>
<dbReference type="PDBsum" id="4BVE"/>
<dbReference type="PDBsum" id="4BVF"/>
<dbReference type="PDBsum" id="4BVG"/>
<dbReference type="PDBsum" id="4C78"/>
<dbReference type="PDBsum" id="5Y4H"/>
<dbReference type="PDBsum" id="5YTK"/>
<dbReference type="SMR" id="Q9NUB1"/>
<dbReference type="BioGRID" id="124122">
    <property type="interactions" value="23"/>
</dbReference>
<dbReference type="DIP" id="DIP-61208N"/>
<dbReference type="FunCoup" id="Q9NUB1">
    <property type="interactions" value="601"/>
</dbReference>
<dbReference type="IntAct" id="Q9NUB1">
    <property type="interactions" value="16"/>
</dbReference>
<dbReference type="MINT" id="Q9NUB1"/>
<dbReference type="STRING" id="9606.ENSP00000316924"/>
<dbReference type="DrugBank" id="DB00171">
    <property type="generic name" value="ATP"/>
</dbReference>
<dbReference type="SwissLipids" id="SLP:000000448"/>
<dbReference type="iPTMnet" id="Q9NUB1"/>
<dbReference type="MetOSite" id="Q9NUB1"/>
<dbReference type="PhosphoSitePlus" id="Q9NUB1"/>
<dbReference type="SwissPalm" id="Q9NUB1"/>
<dbReference type="BioMuta" id="ACSS1"/>
<dbReference type="DMDM" id="30172968"/>
<dbReference type="jPOST" id="Q9NUB1"/>
<dbReference type="MassIVE" id="Q9NUB1"/>
<dbReference type="PaxDb" id="9606-ENSP00000316924"/>
<dbReference type="PeptideAtlas" id="Q9NUB1"/>
<dbReference type="ProteomicsDB" id="27173"/>
<dbReference type="ProteomicsDB" id="30036"/>
<dbReference type="ProteomicsDB" id="82660">
    <molecule id="Q9NUB1-1"/>
</dbReference>
<dbReference type="ProteomicsDB" id="82661">
    <molecule id="Q9NUB1-2"/>
</dbReference>
<dbReference type="Pumba" id="Q9NUB1"/>
<dbReference type="Antibodypedia" id="24959">
    <property type="antibodies" value="140 antibodies from 24 providers"/>
</dbReference>
<dbReference type="DNASU" id="84532"/>
<dbReference type="Ensembl" id="ENST00000323482.9">
    <molecule id="Q9NUB1-1"/>
    <property type="protein sequence ID" value="ENSP00000316924.4"/>
    <property type="gene ID" value="ENSG00000154930.15"/>
</dbReference>
<dbReference type="Ensembl" id="ENST00000432802.6">
    <molecule id="Q9NUB1-4"/>
    <property type="protein sequence ID" value="ENSP00000388793.2"/>
    <property type="gene ID" value="ENSG00000154930.15"/>
</dbReference>
<dbReference type="Ensembl" id="ENST00000537502.5">
    <molecule id="Q9NUB1-3"/>
    <property type="protein sequence ID" value="ENSP00000439304.2"/>
    <property type="gene ID" value="ENSG00000154930.15"/>
</dbReference>
<dbReference type="GeneID" id="84532"/>
<dbReference type="KEGG" id="hsa:84532"/>
<dbReference type="MANE-Select" id="ENST00000323482.9">
    <property type="protein sequence ID" value="ENSP00000316924.4"/>
    <property type="RefSeq nucleotide sequence ID" value="NM_032501.4"/>
    <property type="RefSeq protein sequence ID" value="NP_115890.2"/>
</dbReference>
<dbReference type="UCSC" id="uc002wub.4">
    <molecule id="Q9NUB1-1"/>
    <property type="organism name" value="human"/>
</dbReference>
<dbReference type="AGR" id="HGNC:16091"/>
<dbReference type="CTD" id="84532"/>
<dbReference type="DisGeNET" id="84532"/>
<dbReference type="GeneCards" id="ACSS1"/>
<dbReference type="HGNC" id="HGNC:16091">
    <property type="gene designation" value="ACSS1"/>
</dbReference>
<dbReference type="HPA" id="ENSG00000154930">
    <property type="expression patterns" value="Tissue enhanced (choroid)"/>
</dbReference>
<dbReference type="MIM" id="614355">
    <property type="type" value="gene"/>
</dbReference>
<dbReference type="neXtProt" id="NX_Q9NUB1"/>
<dbReference type="OpenTargets" id="ENSG00000154930"/>
<dbReference type="PharmGKB" id="PA24430"/>
<dbReference type="VEuPathDB" id="HostDB:ENSG00000154930"/>
<dbReference type="eggNOG" id="KOG1175">
    <property type="taxonomic scope" value="Eukaryota"/>
</dbReference>
<dbReference type="GeneTree" id="ENSGT00940000158550"/>
<dbReference type="HOGENOM" id="CLU_000022_3_0_1"/>
<dbReference type="InParanoid" id="Q9NUB1"/>
<dbReference type="OMA" id="AIKASWP"/>
<dbReference type="OrthoDB" id="1706066at2759"/>
<dbReference type="PAN-GO" id="Q9NUB1">
    <property type="GO annotations" value="3 GO annotations based on evolutionary models"/>
</dbReference>
<dbReference type="PhylomeDB" id="Q9NUB1"/>
<dbReference type="TreeFam" id="TF354241"/>
<dbReference type="BRENDA" id="6.2.1.1">
    <property type="organism ID" value="2681"/>
</dbReference>
<dbReference type="PathwayCommons" id="Q9NUB1"/>
<dbReference type="Reactome" id="R-HSA-71384">
    <property type="pathway name" value="Ethanol oxidation"/>
</dbReference>
<dbReference type="SignaLink" id="Q9NUB1"/>
<dbReference type="SIGNOR" id="Q9NUB1"/>
<dbReference type="BioGRID-ORCS" id="84532">
    <property type="hits" value="11 hits in 1152 CRISPR screens"/>
</dbReference>
<dbReference type="ChiTaRS" id="ACSS1">
    <property type="organism name" value="human"/>
</dbReference>
<dbReference type="EvolutionaryTrace" id="Q9NUB1"/>
<dbReference type="GenomeRNAi" id="84532"/>
<dbReference type="Pharos" id="Q9NUB1">
    <property type="development level" value="Tbio"/>
</dbReference>
<dbReference type="PRO" id="PR:Q9NUB1"/>
<dbReference type="Proteomes" id="UP000005640">
    <property type="component" value="Chromosome 20"/>
</dbReference>
<dbReference type="RNAct" id="Q9NUB1">
    <property type="molecule type" value="protein"/>
</dbReference>
<dbReference type="Bgee" id="ENSG00000154930">
    <property type="expression patterns" value="Expressed in apex of heart and 174 other cell types or tissues"/>
</dbReference>
<dbReference type="ExpressionAtlas" id="Q9NUB1">
    <property type="expression patterns" value="baseline and differential"/>
</dbReference>
<dbReference type="GO" id="GO:0005759">
    <property type="term" value="C:mitochondrial matrix"/>
    <property type="evidence" value="ECO:0000314"/>
    <property type="project" value="UniProtKB"/>
</dbReference>
<dbReference type="GO" id="GO:0005739">
    <property type="term" value="C:mitochondrion"/>
    <property type="evidence" value="ECO:0006056"/>
    <property type="project" value="FlyBase"/>
</dbReference>
<dbReference type="GO" id="GO:0003987">
    <property type="term" value="F:acetate-CoA ligase activity"/>
    <property type="evidence" value="ECO:0000314"/>
    <property type="project" value="UniProtKB"/>
</dbReference>
<dbReference type="GO" id="GO:0016208">
    <property type="term" value="F:AMP binding"/>
    <property type="evidence" value="ECO:0007669"/>
    <property type="project" value="InterPro"/>
</dbReference>
<dbReference type="GO" id="GO:0005524">
    <property type="term" value="F:ATP binding"/>
    <property type="evidence" value="ECO:0007669"/>
    <property type="project" value="UniProtKB-KW"/>
</dbReference>
<dbReference type="GO" id="GO:0050218">
    <property type="term" value="F:propionate-CoA ligase activity"/>
    <property type="evidence" value="ECO:0000250"/>
    <property type="project" value="UniProtKB"/>
</dbReference>
<dbReference type="GO" id="GO:0019413">
    <property type="term" value="P:acetate biosynthetic process"/>
    <property type="evidence" value="ECO:0007669"/>
    <property type="project" value="Ensembl"/>
</dbReference>
<dbReference type="GO" id="GO:0006085">
    <property type="term" value="P:acetyl-CoA biosynthetic process"/>
    <property type="evidence" value="ECO:0000314"/>
    <property type="project" value="UniProtKB"/>
</dbReference>
<dbReference type="GO" id="GO:0019427">
    <property type="term" value="P:acetyl-CoA biosynthetic process from acetate"/>
    <property type="evidence" value="ECO:0007669"/>
    <property type="project" value="InterPro"/>
</dbReference>
<dbReference type="GO" id="GO:0006068">
    <property type="term" value="P:ethanol catabolic process"/>
    <property type="evidence" value="ECO:0000304"/>
    <property type="project" value="Reactome"/>
</dbReference>
<dbReference type="GO" id="GO:0019542">
    <property type="term" value="P:propionate biosynthetic process"/>
    <property type="evidence" value="ECO:0007669"/>
    <property type="project" value="Ensembl"/>
</dbReference>
<dbReference type="CDD" id="cd05966">
    <property type="entry name" value="ACS"/>
    <property type="match status" value="1"/>
</dbReference>
<dbReference type="FunFam" id="3.30.300.30:FF:000025">
    <property type="entry name" value="Acetyl-coenzyme A synthetase"/>
    <property type="match status" value="1"/>
</dbReference>
<dbReference type="FunFam" id="3.40.50.12780:FF:000011">
    <property type="entry name" value="Acetyl-coenzyme A synthetase 2-like, mitochondrial"/>
    <property type="match status" value="1"/>
</dbReference>
<dbReference type="Gene3D" id="3.30.300.30">
    <property type="match status" value="1"/>
</dbReference>
<dbReference type="Gene3D" id="3.40.50.12780">
    <property type="entry name" value="N-terminal domain of ligase-like"/>
    <property type="match status" value="1"/>
</dbReference>
<dbReference type="InterPro" id="IPR011904">
    <property type="entry name" value="Ac_CoA_lig"/>
</dbReference>
<dbReference type="InterPro" id="IPR032387">
    <property type="entry name" value="ACAS_N"/>
</dbReference>
<dbReference type="InterPro" id="IPR025110">
    <property type="entry name" value="AMP-bd_C"/>
</dbReference>
<dbReference type="InterPro" id="IPR045851">
    <property type="entry name" value="AMP-bd_C_sf"/>
</dbReference>
<dbReference type="InterPro" id="IPR020845">
    <property type="entry name" value="AMP-binding_CS"/>
</dbReference>
<dbReference type="InterPro" id="IPR000873">
    <property type="entry name" value="AMP-dep_synth/lig_dom"/>
</dbReference>
<dbReference type="InterPro" id="IPR042099">
    <property type="entry name" value="ANL_N_sf"/>
</dbReference>
<dbReference type="NCBIfam" id="TIGR02188">
    <property type="entry name" value="Ac_CoA_lig_AcsA"/>
    <property type="match status" value="1"/>
</dbReference>
<dbReference type="NCBIfam" id="NF001208">
    <property type="entry name" value="PRK00174.1"/>
    <property type="match status" value="1"/>
</dbReference>
<dbReference type="PANTHER" id="PTHR24095">
    <property type="entry name" value="ACETYL-COENZYME A SYNTHETASE"/>
    <property type="match status" value="1"/>
</dbReference>
<dbReference type="PANTHER" id="PTHR24095:SF110">
    <property type="entry name" value="ACETYL-COENZYME A SYNTHETASE 2-LIKE, MITOCHONDRIAL"/>
    <property type="match status" value="1"/>
</dbReference>
<dbReference type="Pfam" id="PF16177">
    <property type="entry name" value="ACAS_N"/>
    <property type="match status" value="1"/>
</dbReference>
<dbReference type="Pfam" id="PF00501">
    <property type="entry name" value="AMP-binding"/>
    <property type="match status" value="1"/>
</dbReference>
<dbReference type="Pfam" id="PF13193">
    <property type="entry name" value="AMP-binding_C"/>
    <property type="match status" value="1"/>
</dbReference>
<dbReference type="SUPFAM" id="SSF56801">
    <property type="entry name" value="Acetyl-CoA synthetase-like"/>
    <property type="match status" value="1"/>
</dbReference>
<dbReference type="PROSITE" id="PS00455">
    <property type="entry name" value="AMP_BINDING"/>
    <property type="match status" value="1"/>
</dbReference>
<gene>
    <name type="primary">ACSS1</name>
    <name type="synonym">ACAS2L</name>
    <name type="synonym">KIAA1846</name>
</gene>
<name>ACS2L_HUMAN</name>
<evidence type="ECO:0000250" key="1"/>
<evidence type="ECO:0000250" key="2">
    <source>
        <dbReference type="UniProtKB" id="Q99NB1"/>
    </source>
</evidence>
<evidence type="ECO:0000256" key="3">
    <source>
        <dbReference type="SAM" id="MobiDB-lite"/>
    </source>
</evidence>
<evidence type="ECO:0000269" key="4">
    <source>
    </source>
</evidence>
<evidence type="ECO:0000269" key="5">
    <source>
    </source>
</evidence>
<evidence type="ECO:0000269" key="6">
    <source>
    </source>
</evidence>
<evidence type="ECO:0000269" key="7">
    <source>
    </source>
</evidence>
<evidence type="ECO:0000303" key="8">
    <source>
    </source>
</evidence>
<evidence type="ECO:0000303" key="9">
    <source>
    </source>
</evidence>
<evidence type="ECO:0000303" key="10">
    <source>
    </source>
</evidence>
<evidence type="ECO:0000305" key="11"/>
<evidence type="ECO:0000305" key="12">
    <source>
    </source>
</evidence>
<evidence type="ECO:0007744" key="13">
    <source>
    </source>
</evidence>
<reference key="1">
    <citation type="journal article" date="2004" name="Nat. Genet.">
        <title>Complete sequencing and characterization of 21,243 full-length human cDNAs.</title>
        <authorList>
            <person name="Ota T."/>
            <person name="Suzuki Y."/>
            <person name="Nishikawa T."/>
            <person name="Otsuki T."/>
            <person name="Sugiyama T."/>
            <person name="Irie R."/>
            <person name="Wakamatsu A."/>
            <person name="Hayashi K."/>
            <person name="Sato H."/>
            <person name="Nagai K."/>
            <person name="Kimura K."/>
            <person name="Makita H."/>
            <person name="Sekine M."/>
            <person name="Obayashi M."/>
            <person name="Nishi T."/>
            <person name="Shibahara T."/>
            <person name="Tanaka T."/>
            <person name="Ishii S."/>
            <person name="Yamamoto J."/>
            <person name="Saito K."/>
            <person name="Kawai Y."/>
            <person name="Isono Y."/>
            <person name="Nakamura Y."/>
            <person name="Nagahari K."/>
            <person name="Murakami K."/>
            <person name="Yasuda T."/>
            <person name="Iwayanagi T."/>
            <person name="Wagatsuma M."/>
            <person name="Shiratori A."/>
            <person name="Sudo H."/>
            <person name="Hosoiri T."/>
            <person name="Kaku Y."/>
            <person name="Kodaira H."/>
            <person name="Kondo H."/>
            <person name="Sugawara M."/>
            <person name="Takahashi M."/>
            <person name="Kanda K."/>
            <person name="Yokoi T."/>
            <person name="Furuya T."/>
            <person name="Kikkawa E."/>
            <person name="Omura Y."/>
            <person name="Abe K."/>
            <person name="Kamihara K."/>
            <person name="Katsuta N."/>
            <person name="Sato K."/>
            <person name="Tanikawa M."/>
            <person name="Yamazaki M."/>
            <person name="Ninomiya K."/>
            <person name="Ishibashi T."/>
            <person name="Yamashita H."/>
            <person name="Murakawa K."/>
            <person name="Fujimori K."/>
            <person name="Tanai H."/>
            <person name="Kimata M."/>
            <person name="Watanabe M."/>
            <person name="Hiraoka S."/>
            <person name="Chiba Y."/>
            <person name="Ishida S."/>
            <person name="Ono Y."/>
            <person name="Takiguchi S."/>
            <person name="Watanabe S."/>
            <person name="Yosida M."/>
            <person name="Hotuta T."/>
            <person name="Kusano J."/>
            <person name="Kanehori K."/>
            <person name="Takahashi-Fujii A."/>
            <person name="Hara H."/>
            <person name="Tanase T.-O."/>
            <person name="Nomura Y."/>
            <person name="Togiya S."/>
            <person name="Komai F."/>
            <person name="Hara R."/>
            <person name="Takeuchi K."/>
            <person name="Arita M."/>
            <person name="Imose N."/>
            <person name="Musashino K."/>
            <person name="Yuuki H."/>
            <person name="Oshima A."/>
            <person name="Sasaki N."/>
            <person name="Aotsuka S."/>
            <person name="Yoshikawa Y."/>
            <person name="Matsunawa H."/>
            <person name="Ichihara T."/>
            <person name="Shiohata N."/>
            <person name="Sano S."/>
            <person name="Moriya S."/>
            <person name="Momiyama H."/>
            <person name="Satoh N."/>
            <person name="Takami S."/>
            <person name="Terashima Y."/>
            <person name="Suzuki O."/>
            <person name="Nakagawa S."/>
            <person name="Senoh A."/>
            <person name="Mizoguchi H."/>
            <person name="Goto Y."/>
            <person name="Shimizu F."/>
            <person name="Wakebe H."/>
            <person name="Hishigaki H."/>
            <person name="Watanabe T."/>
            <person name="Sugiyama A."/>
            <person name="Takemoto M."/>
            <person name="Kawakami B."/>
            <person name="Yamazaki M."/>
            <person name="Watanabe K."/>
            <person name="Kumagai A."/>
            <person name="Itakura S."/>
            <person name="Fukuzumi Y."/>
            <person name="Fujimori Y."/>
            <person name="Komiyama M."/>
            <person name="Tashiro H."/>
            <person name="Tanigami A."/>
            <person name="Fujiwara T."/>
            <person name="Ono T."/>
            <person name="Yamada K."/>
            <person name="Fujii Y."/>
            <person name="Ozaki K."/>
            <person name="Hirao M."/>
            <person name="Ohmori Y."/>
            <person name="Kawabata A."/>
            <person name="Hikiji T."/>
            <person name="Kobatake N."/>
            <person name="Inagaki H."/>
            <person name="Ikema Y."/>
            <person name="Okamoto S."/>
            <person name="Okitani R."/>
            <person name="Kawakami T."/>
            <person name="Noguchi S."/>
            <person name="Itoh T."/>
            <person name="Shigeta K."/>
            <person name="Senba T."/>
            <person name="Matsumura K."/>
            <person name="Nakajima Y."/>
            <person name="Mizuno T."/>
            <person name="Morinaga M."/>
            <person name="Sasaki M."/>
            <person name="Togashi T."/>
            <person name="Oyama M."/>
            <person name="Hata H."/>
            <person name="Watanabe M."/>
            <person name="Komatsu T."/>
            <person name="Mizushima-Sugano J."/>
            <person name="Satoh T."/>
            <person name="Shirai Y."/>
            <person name="Takahashi Y."/>
            <person name="Nakagawa K."/>
            <person name="Okumura K."/>
            <person name="Nagase T."/>
            <person name="Nomura N."/>
            <person name="Kikuchi H."/>
            <person name="Masuho Y."/>
            <person name="Yamashita R."/>
            <person name="Nakai K."/>
            <person name="Yada T."/>
            <person name="Nakamura Y."/>
            <person name="Ohara O."/>
            <person name="Isogai T."/>
            <person name="Sugano S."/>
        </authorList>
    </citation>
    <scope>NUCLEOTIDE SEQUENCE [LARGE SCALE MRNA] (ISOFORMS 3 AND 4)</scope>
    <scope>NUCLEOTIDE SEQUENCE [LARGE SCALE MRNA] OF 169-689 (ISOFORM 1)</scope>
    <scope>VARIANT MET-488</scope>
    <source>
        <tissue>Placenta</tissue>
        <tissue>Thalamus</tissue>
        <tissue>Tongue</tissue>
    </source>
</reference>
<reference key="2">
    <citation type="journal article" date="2001" name="Nature">
        <title>The DNA sequence and comparative analysis of human chromosome 20.</title>
        <authorList>
            <person name="Deloukas P."/>
            <person name="Matthews L.H."/>
            <person name="Ashurst J.L."/>
            <person name="Burton J."/>
            <person name="Gilbert J.G.R."/>
            <person name="Jones M."/>
            <person name="Stavrides G."/>
            <person name="Almeida J.P."/>
            <person name="Babbage A.K."/>
            <person name="Bagguley C.L."/>
            <person name="Bailey J."/>
            <person name="Barlow K.F."/>
            <person name="Bates K.N."/>
            <person name="Beard L.M."/>
            <person name="Beare D.M."/>
            <person name="Beasley O.P."/>
            <person name="Bird C.P."/>
            <person name="Blakey S.E."/>
            <person name="Bridgeman A.M."/>
            <person name="Brown A.J."/>
            <person name="Buck D."/>
            <person name="Burrill W.D."/>
            <person name="Butler A.P."/>
            <person name="Carder C."/>
            <person name="Carter N.P."/>
            <person name="Chapman J.C."/>
            <person name="Clamp M."/>
            <person name="Clark G."/>
            <person name="Clark L.N."/>
            <person name="Clark S.Y."/>
            <person name="Clee C.M."/>
            <person name="Clegg S."/>
            <person name="Cobley V.E."/>
            <person name="Collier R.E."/>
            <person name="Connor R.E."/>
            <person name="Corby N.R."/>
            <person name="Coulson A."/>
            <person name="Coville G.J."/>
            <person name="Deadman R."/>
            <person name="Dhami P.D."/>
            <person name="Dunn M."/>
            <person name="Ellington A.G."/>
            <person name="Frankland J.A."/>
            <person name="Fraser A."/>
            <person name="French L."/>
            <person name="Garner P."/>
            <person name="Grafham D.V."/>
            <person name="Griffiths C."/>
            <person name="Griffiths M.N.D."/>
            <person name="Gwilliam R."/>
            <person name="Hall R.E."/>
            <person name="Hammond S."/>
            <person name="Harley J.L."/>
            <person name="Heath P.D."/>
            <person name="Ho S."/>
            <person name="Holden J.L."/>
            <person name="Howden P.J."/>
            <person name="Huckle E."/>
            <person name="Hunt A.R."/>
            <person name="Hunt S.E."/>
            <person name="Jekosch K."/>
            <person name="Johnson C.M."/>
            <person name="Johnson D."/>
            <person name="Kay M.P."/>
            <person name="Kimberley A.M."/>
            <person name="King A."/>
            <person name="Knights A."/>
            <person name="Laird G.K."/>
            <person name="Lawlor S."/>
            <person name="Lehvaeslaiho M.H."/>
            <person name="Leversha M.A."/>
            <person name="Lloyd C."/>
            <person name="Lloyd D.M."/>
            <person name="Lovell J.D."/>
            <person name="Marsh V.L."/>
            <person name="Martin S.L."/>
            <person name="McConnachie L.J."/>
            <person name="McLay K."/>
            <person name="McMurray A.A."/>
            <person name="Milne S.A."/>
            <person name="Mistry D."/>
            <person name="Moore M.J.F."/>
            <person name="Mullikin J.C."/>
            <person name="Nickerson T."/>
            <person name="Oliver K."/>
            <person name="Parker A."/>
            <person name="Patel R."/>
            <person name="Pearce T.A.V."/>
            <person name="Peck A.I."/>
            <person name="Phillimore B.J.C.T."/>
            <person name="Prathalingam S.R."/>
            <person name="Plumb R.W."/>
            <person name="Ramsay H."/>
            <person name="Rice C.M."/>
            <person name="Ross M.T."/>
            <person name="Scott C.E."/>
            <person name="Sehra H.K."/>
            <person name="Shownkeen R."/>
            <person name="Sims S."/>
            <person name="Skuce C.D."/>
            <person name="Smith M.L."/>
            <person name="Soderlund C."/>
            <person name="Steward C.A."/>
            <person name="Sulston J.E."/>
            <person name="Swann R.M."/>
            <person name="Sycamore N."/>
            <person name="Taylor R."/>
            <person name="Tee L."/>
            <person name="Thomas D.W."/>
            <person name="Thorpe A."/>
            <person name="Tracey A."/>
            <person name="Tromans A.C."/>
            <person name="Vaudin M."/>
            <person name="Wall M."/>
            <person name="Wallis J.M."/>
            <person name="Whitehead S.L."/>
            <person name="Whittaker P."/>
            <person name="Willey D.L."/>
            <person name="Williams L."/>
            <person name="Williams S.A."/>
            <person name="Wilming L."/>
            <person name="Wray P.W."/>
            <person name="Hubbard T."/>
            <person name="Durbin R.M."/>
            <person name="Bentley D.R."/>
            <person name="Beck S."/>
            <person name="Rogers J."/>
        </authorList>
    </citation>
    <scope>NUCLEOTIDE SEQUENCE [LARGE SCALE GENOMIC DNA]</scope>
</reference>
<reference key="3">
    <citation type="submission" date="2005-09" db="EMBL/GenBank/DDBJ databases">
        <authorList>
            <person name="Mural R.J."/>
            <person name="Istrail S."/>
            <person name="Sutton G.G."/>
            <person name="Florea L."/>
            <person name="Halpern A.L."/>
            <person name="Mobarry C.M."/>
            <person name="Lippert R."/>
            <person name="Walenz B."/>
            <person name="Shatkay H."/>
            <person name="Dew I."/>
            <person name="Miller J.R."/>
            <person name="Flanigan M.J."/>
            <person name="Edwards N.J."/>
            <person name="Bolanos R."/>
            <person name="Fasulo D."/>
            <person name="Halldorsson B.V."/>
            <person name="Hannenhalli S."/>
            <person name="Turner R."/>
            <person name="Yooseph S."/>
            <person name="Lu F."/>
            <person name="Nusskern D.R."/>
            <person name="Shue B.C."/>
            <person name="Zheng X.H."/>
            <person name="Zhong F."/>
            <person name="Delcher A.L."/>
            <person name="Huson D.H."/>
            <person name="Kravitz S.A."/>
            <person name="Mouchard L."/>
            <person name="Reinert K."/>
            <person name="Remington K.A."/>
            <person name="Clark A.G."/>
            <person name="Waterman M.S."/>
            <person name="Eichler E.E."/>
            <person name="Adams M.D."/>
            <person name="Hunkapiller M.W."/>
            <person name="Myers E.W."/>
            <person name="Venter J.C."/>
        </authorList>
    </citation>
    <scope>NUCLEOTIDE SEQUENCE [LARGE SCALE GENOMIC DNA]</scope>
</reference>
<reference key="4">
    <citation type="journal article" date="2004" name="Genome Res.">
        <title>The status, quality, and expansion of the NIH full-length cDNA project: the Mammalian Gene Collection (MGC).</title>
        <authorList>
            <consortium name="The MGC Project Team"/>
        </authorList>
    </citation>
    <scope>NUCLEOTIDE SEQUENCE [LARGE SCALE MRNA] (ISOFORMS 1 AND 2)</scope>
    <scope>VARIANT MET-488</scope>
    <source>
        <tissue>Brain</tissue>
        <tissue>Testis</tissue>
    </source>
</reference>
<reference key="5">
    <citation type="journal article" date="2001" name="DNA Res.">
        <title>Prediction of the coding sequences of unidentified human genes. XX. The complete sequences of 100 new cDNA clones from brain which code for large proteins in vitro.</title>
        <authorList>
            <person name="Nagase T."/>
            <person name="Nakayama M."/>
            <person name="Nakajima D."/>
            <person name="Kikuno R."/>
            <person name="Ohara O."/>
        </authorList>
    </citation>
    <scope>NUCLEOTIDE SEQUENCE [LARGE SCALE MRNA] OF 336-689 (ISOFORM 1)</scope>
    <source>
        <tissue>Brain</tissue>
    </source>
</reference>
<reference key="6">
    <citation type="journal article" date="2002" name="DNA Res.">
        <title>Construction of expression-ready cDNA clones for KIAA genes: manual curation of 330 KIAA cDNA clones.</title>
        <authorList>
            <person name="Nakajima D."/>
            <person name="Okazaki N."/>
            <person name="Yamakawa H."/>
            <person name="Kikuno R."/>
            <person name="Ohara O."/>
            <person name="Nagase T."/>
        </authorList>
    </citation>
    <scope>SEQUENCE REVISION</scope>
</reference>
<reference key="7">
    <citation type="journal article" date="2006" name="Proc. Natl. Acad. Sci. U.S.A.">
        <title>Reversible lysine acetylation controls the activity of the mitochondrial enzyme acetyl-CoA synthetase 2.</title>
        <authorList>
            <person name="Schwer B."/>
            <person name="Bunkenborg J."/>
            <person name="Verdin R.O."/>
            <person name="Andersen J.S."/>
            <person name="Verdin E."/>
        </authorList>
    </citation>
    <scope>ACETYLATION AT LYS-642</scope>
    <scope>MUTAGENESIS OF LYS-642</scope>
    <scope>FUNCTION</scope>
    <scope>CATALYTIC ACTIVITY</scope>
    <scope>INTERACTION WITH SIRT3</scope>
    <scope>ACTIVITY REGULATION</scope>
    <scope>PROTEIN SEQUENCE OF N-TERMINUS</scope>
    <scope>IDENTIFICATION BY MASS SPECTROMETRY</scope>
    <scope>SUBCELLULAR LOCATION</scope>
</reference>
<reference key="8">
    <citation type="journal article" date="2009" name="Science">
        <title>Lysine acetylation targets protein complexes and co-regulates major cellular functions.</title>
        <authorList>
            <person name="Choudhary C."/>
            <person name="Kumar C."/>
            <person name="Gnad F."/>
            <person name="Nielsen M.L."/>
            <person name="Rehman M."/>
            <person name="Walther T.C."/>
            <person name="Olsen J.V."/>
            <person name="Mann M."/>
        </authorList>
    </citation>
    <scope>ACETYLATION [LARGE SCALE ANALYSIS] AT LYS-396</scope>
    <scope>IDENTIFICATION BY MASS SPECTROMETRY [LARGE SCALE ANALYSIS]</scope>
</reference>
<reference key="9">
    <citation type="journal article" date="2011" name="BMC Syst. Biol.">
        <title>Initial characterization of the human central proteome.</title>
        <authorList>
            <person name="Burkard T.R."/>
            <person name="Planyavsky M."/>
            <person name="Kaupe I."/>
            <person name="Breitwieser F.P."/>
            <person name="Buerckstuemmer T."/>
            <person name="Bennett K.L."/>
            <person name="Superti-Furga G."/>
            <person name="Colinge J."/>
        </authorList>
    </citation>
    <scope>IDENTIFICATION BY MASS SPECTROMETRY [LARGE SCALE ANALYSIS]</scope>
</reference>
<reference key="10">
    <citation type="journal article" date="2015" name="Proteomics">
        <title>N-terminome analysis of the human mitochondrial proteome.</title>
        <authorList>
            <person name="Vaca Jacome A.S."/>
            <person name="Rabilloud T."/>
            <person name="Schaeffer-Reiss C."/>
            <person name="Rompais M."/>
            <person name="Ayoub D."/>
            <person name="Lane L."/>
            <person name="Bairoch A."/>
            <person name="Van Dorsselaer A."/>
            <person name="Carapito C."/>
        </authorList>
    </citation>
    <scope>IDENTIFICATION BY MASS SPECTROMETRY [LARGE SCALE ANALYSIS]</scope>
</reference>
<reference key="11">
    <citation type="journal article" date="2009" name="J. Biol. Chem.">
        <title>Crystal structures of human SIRT3 displaying substrate-induced conformational changes.</title>
        <authorList>
            <person name="Jin L."/>
            <person name="Wei W."/>
            <person name="Jiang Y."/>
            <person name="Peng H."/>
            <person name="Cai J."/>
            <person name="Mao C."/>
            <person name="Dai H."/>
            <person name="Choy W."/>
            <person name="Bemis J.E."/>
            <person name="Jirousek M.R."/>
            <person name="Milne J.C."/>
            <person name="Westphal C.H."/>
            <person name="Perni R.B."/>
        </authorList>
    </citation>
    <scope>X-RAY CRYSTALLOGRAPHY (1.8 ANGSTROMS) OF 638-649 IN COMPLEX WITH SIRT3</scope>
</reference>